<organism>
    <name type="scientific">Mycobacterium marinum (strain ATCC BAA-535 / M)</name>
    <dbReference type="NCBI Taxonomy" id="216594"/>
    <lineage>
        <taxon>Bacteria</taxon>
        <taxon>Bacillati</taxon>
        <taxon>Actinomycetota</taxon>
        <taxon>Actinomycetes</taxon>
        <taxon>Mycobacteriales</taxon>
        <taxon>Mycobacteriaceae</taxon>
        <taxon>Mycobacterium</taxon>
        <taxon>Mycobacterium ulcerans group</taxon>
    </lineage>
</organism>
<dbReference type="EMBL" id="CP000854">
    <property type="protein sequence ID" value="ACC39978.1"/>
    <property type="molecule type" value="Genomic_DNA"/>
</dbReference>
<dbReference type="RefSeq" id="WP_012393367.1">
    <property type="nucleotide sequence ID" value="NC_010612.1"/>
</dbReference>
<dbReference type="SMR" id="B2HGJ2"/>
<dbReference type="STRING" id="216594.MMAR_1527"/>
<dbReference type="KEGG" id="mmi:MMAR_1527"/>
<dbReference type="eggNOG" id="COG0216">
    <property type="taxonomic scope" value="Bacteria"/>
</dbReference>
<dbReference type="HOGENOM" id="CLU_036856_6_0_11"/>
<dbReference type="OrthoDB" id="9806673at2"/>
<dbReference type="Proteomes" id="UP000001190">
    <property type="component" value="Chromosome"/>
</dbReference>
<dbReference type="GO" id="GO:0005737">
    <property type="term" value="C:cytoplasm"/>
    <property type="evidence" value="ECO:0007669"/>
    <property type="project" value="UniProtKB-SubCell"/>
</dbReference>
<dbReference type="GO" id="GO:0016149">
    <property type="term" value="F:translation release factor activity, codon specific"/>
    <property type="evidence" value="ECO:0007669"/>
    <property type="project" value="UniProtKB-UniRule"/>
</dbReference>
<dbReference type="FunFam" id="3.30.160.20:FF:000010">
    <property type="entry name" value="Peptide chain release factor 2"/>
    <property type="match status" value="1"/>
</dbReference>
<dbReference type="Gene3D" id="3.30.160.20">
    <property type="match status" value="1"/>
</dbReference>
<dbReference type="Gene3D" id="3.30.70.1660">
    <property type="match status" value="1"/>
</dbReference>
<dbReference type="Gene3D" id="1.20.58.410">
    <property type="entry name" value="Release factor"/>
    <property type="match status" value="1"/>
</dbReference>
<dbReference type="HAMAP" id="MF_00094">
    <property type="entry name" value="Rel_fac_2"/>
    <property type="match status" value="1"/>
</dbReference>
<dbReference type="InterPro" id="IPR005139">
    <property type="entry name" value="PCRF"/>
</dbReference>
<dbReference type="InterPro" id="IPR000352">
    <property type="entry name" value="Pep_chain_release_fac_I"/>
</dbReference>
<dbReference type="InterPro" id="IPR045853">
    <property type="entry name" value="Pep_chain_release_fac_I_sf"/>
</dbReference>
<dbReference type="InterPro" id="IPR004374">
    <property type="entry name" value="PrfB"/>
</dbReference>
<dbReference type="NCBIfam" id="TIGR00020">
    <property type="entry name" value="prfB"/>
    <property type="match status" value="1"/>
</dbReference>
<dbReference type="PANTHER" id="PTHR43116:SF3">
    <property type="entry name" value="CLASS I PEPTIDE CHAIN RELEASE FACTOR"/>
    <property type="match status" value="1"/>
</dbReference>
<dbReference type="PANTHER" id="PTHR43116">
    <property type="entry name" value="PEPTIDE CHAIN RELEASE FACTOR 2"/>
    <property type="match status" value="1"/>
</dbReference>
<dbReference type="Pfam" id="PF03462">
    <property type="entry name" value="PCRF"/>
    <property type="match status" value="1"/>
</dbReference>
<dbReference type="Pfam" id="PF00472">
    <property type="entry name" value="RF-1"/>
    <property type="match status" value="1"/>
</dbReference>
<dbReference type="SMART" id="SM00937">
    <property type="entry name" value="PCRF"/>
    <property type="match status" value="1"/>
</dbReference>
<dbReference type="SUPFAM" id="SSF75620">
    <property type="entry name" value="Release factor"/>
    <property type="match status" value="1"/>
</dbReference>
<dbReference type="PROSITE" id="PS00745">
    <property type="entry name" value="RF_PROK_I"/>
    <property type="match status" value="1"/>
</dbReference>
<accession>B2HGJ2</accession>
<evidence type="ECO:0000255" key="1">
    <source>
        <dbReference type="HAMAP-Rule" id="MF_00094"/>
    </source>
</evidence>
<protein>
    <recommendedName>
        <fullName evidence="1">Peptide chain release factor 2</fullName>
        <shortName evidence="1">RF-2</shortName>
    </recommendedName>
</protein>
<sequence length="371" mass="41525">MEPDRQAEIAALDSALTTVERVLDVEGLRSRIEKLEHEASDPKLWDDQTRAQRVTSELSHTQGELRRVEELRRRLEDLPVLYELAAEEEGAAAGEALAEADAEFKALRADIEATEVRTLLSGEYDEREALVTIRSGAGGVDAADWAEMLMRMYVRWAEQHKYPVEVFDTSYAEEAGIKSATFAVHAPFAYGTLSVEQGTHRLVRISPFDNQSRRQTSFAEVEVLPVVETTDHIDIPEGDVRVDVYRSSGPGGQSVNTTDSAVRLTHIPTGIVVTCQNEKSQLQNKVAAMRVLQAKLLERKRIEERAELDALKGDGGSSWGNQMRSYVLHPYQMVKDLRTEYEVGNPATVLDGDIDGFLEAGIRWRNRKDDD</sequence>
<proteinExistence type="inferred from homology"/>
<keyword id="KW-0963">Cytoplasm</keyword>
<keyword id="KW-0488">Methylation</keyword>
<keyword id="KW-0648">Protein biosynthesis</keyword>
<keyword id="KW-1185">Reference proteome</keyword>
<feature type="chain" id="PRO_1000093547" description="Peptide chain release factor 2">
    <location>
        <begin position="1"/>
        <end position="371"/>
    </location>
</feature>
<feature type="modified residue" description="N5-methylglutamine" evidence="1">
    <location>
        <position position="253"/>
    </location>
</feature>
<reference key="1">
    <citation type="journal article" date="2008" name="Genome Res.">
        <title>Insights from the complete genome sequence of Mycobacterium marinum on the evolution of Mycobacterium tuberculosis.</title>
        <authorList>
            <person name="Stinear T.P."/>
            <person name="Seemann T."/>
            <person name="Harrison P.F."/>
            <person name="Jenkin G.A."/>
            <person name="Davies J.K."/>
            <person name="Johnson P.D."/>
            <person name="Abdellah Z."/>
            <person name="Arrowsmith C."/>
            <person name="Chillingworth T."/>
            <person name="Churcher C."/>
            <person name="Clarke K."/>
            <person name="Cronin A."/>
            <person name="Davis P."/>
            <person name="Goodhead I."/>
            <person name="Holroyd N."/>
            <person name="Jagels K."/>
            <person name="Lord A."/>
            <person name="Moule S."/>
            <person name="Mungall K."/>
            <person name="Norbertczak H."/>
            <person name="Quail M.A."/>
            <person name="Rabbinowitsch E."/>
            <person name="Walker D."/>
            <person name="White B."/>
            <person name="Whitehead S."/>
            <person name="Small P.L."/>
            <person name="Brosch R."/>
            <person name="Ramakrishnan L."/>
            <person name="Fischbach M.A."/>
            <person name="Parkhill J."/>
            <person name="Cole S.T."/>
        </authorList>
    </citation>
    <scope>NUCLEOTIDE SEQUENCE [LARGE SCALE GENOMIC DNA]</scope>
    <source>
        <strain>ATCC BAA-535 / M</strain>
    </source>
</reference>
<comment type="function">
    <text evidence="1">Peptide chain release factor 2 directs the termination of translation in response to the peptide chain termination codons UGA and UAA.</text>
</comment>
<comment type="subcellular location">
    <subcellularLocation>
        <location evidence="1">Cytoplasm</location>
    </subcellularLocation>
</comment>
<comment type="PTM">
    <text evidence="1">Methylated by PrmC. Methylation increases the termination efficiency of RF2.</text>
</comment>
<comment type="similarity">
    <text evidence="1">Belongs to the prokaryotic/mitochondrial release factor family.</text>
</comment>
<name>RF2_MYCMM</name>
<gene>
    <name evidence="1" type="primary">prfB</name>
    <name type="ordered locus">MMAR_1527</name>
</gene>